<sequence length="193" mass="22900">MKIDPIELIKLQRFEELFEKYFTYYDDNTKALLENEKLYIEIGNKCVQFDELLDRFIKVLINFNLLENSKEFIINSILIKSIKNGFLKNLQYFLTTDNRNLFKISNEIIIKILLNSAIINDNITMVSYLLSILFPFLFFNNNQIISSQTIPRISTVTKEEKELLLSINEQLNSIKLITKMENYLKKTILFFDL</sequence>
<gene>
    <name type="ORF">DDB_G0272821</name>
</gene>
<organism>
    <name type="scientific">Dictyostelium discoideum</name>
    <name type="common">Social amoeba</name>
    <dbReference type="NCBI Taxonomy" id="44689"/>
    <lineage>
        <taxon>Eukaryota</taxon>
        <taxon>Amoebozoa</taxon>
        <taxon>Evosea</taxon>
        <taxon>Eumycetozoa</taxon>
        <taxon>Dictyostelia</taxon>
        <taxon>Dictyosteliales</taxon>
        <taxon>Dictyosteliaceae</taxon>
        <taxon>Dictyostelium</taxon>
    </lineage>
</organism>
<protein>
    <recommendedName>
        <fullName>Putative uncharacterized protein DDB_G0272821</fullName>
    </recommendedName>
</protein>
<accession>Q86IG7</accession>
<accession>Q559C1</accession>
<keyword id="KW-1185">Reference proteome</keyword>
<feature type="chain" id="PRO_0000348174" description="Putative uncharacterized protein DDB_G0272821">
    <location>
        <begin position="1"/>
        <end position="193"/>
    </location>
</feature>
<dbReference type="EMBL" id="AAFI02000008">
    <property type="protein sequence ID" value="EAL71048.1"/>
    <property type="molecule type" value="Genomic_DNA"/>
</dbReference>
<dbReference type="RefSeq" id="XP_644895.1">
    <property type="nucleotide sequence ID" value="XM_639803.1"/>
</dbReference>
<dbReference type="SMR" id="Q86IG7"/>
<dbReference type="PaxDb" id="44689-DDB0168915"/>
<dbReference type="EnsemblProtists" id="EAL71048">
    <property type="protein sequence ID" value="EAL71048"/>
    <property type="gene ID" value="DDB_G0272821"/>
</dbReference>
<dbReference type="GeneID" id="8618574"/>
<dbReference type="KEGG" id="ddi:DDB_G0272821"/>
<dbReference type="dictyBase" id="DDB_G0272821"/>
<dbReference type="VEuPathDB" id="AmoebaDB:DDB_G0272821"/>
<dbReference type="HOGENOM" id="CLU_1411153_0_0_1"/>
<dbReference type="InParanoid" id="Q86IG7"/>
<dbReference type="PRO" id="PR:Q86IG7"/>
<dbReference type="Proteomes" id="UP000002195">
    <property type="component" value="Chromosome 2"/>
</dbReference>
<reference key="1">
    <citation type="journal article" date="2002" name="Nature">
        <title>Sequence and analysis of chromosome 2 of Dictyostelium discoideum.</title>
        <authorList>
            <person name="Gloeckner G."/>
            <person name="Eichinger L."/>
            <person name="Szafranski K."/>
            <person name="Pachebat J.A."/>
            <person name="Bankier A.T."/>
            <person name="Dear P.H."/>
            <person name="Lehmann R."/>
            <person name="Baumgart C."/>
            <person name="Parra G."/>
            <person name="Abril J.F."/>
            <person name="Guigo R."/>
            <person name="Kumpf K."/>
            <person name="Tunggal B."/>
            <person name="Cox E.C."/>
            <person name="Quail M.A."/>
            <person name="Platzer M."/>
            <person name="Rosenthal A."/>
            <person name="Noegel A.A."/>
        </authorList>
    </citation>
    <scope>NUCLEOTIDE SEQUENCE [LARGE SCALE GENOMIC DNA]</scope>
    <source>
        <strain>AX4</strain>
    </source>
</reference>
<reference key="2">
    <citation type="journal article" date="2005" name="Nature">
        <title>The genome of the social amoeba Dictyostelium discoideum.</title>
        <authorList>
            <person name="Eichinger L."/>
            <person name="Pachebat J.A."/>
            <person name="Gloeckner G."/>
            <person name="Rajandream M.A."/>
            <person name="Sucgang R."/>
            <person name="Berriman M."/>
            <person name="Song J."/>
            <person name="Olsen R."/>
            <person name="Szafranski K."/>
            <person name="Xu Q."/>
            <person name="Tunggal B."/>
            <person name="Kummerfeld S."/>
            <person name="Madera M."/>
            <person name="Konfortov B.A."/>
            <person name="Rivero F."/>
            <person name="Bankier A.T."/>
            <person name="Lehmann R."/>
            <person name="Hamlin N."/>
            <person name="Davies R."/>
            <person name="Gaudet P."/>
            <person name="Fey P."/>
            <person name="Pilcher K."/>
            <person name="Chen G."/>
            <person name="Saunders D."/>
            <person name="Sodergren E.J."/>
            <person name="Davis P."/>
            <person name="Kerhornou A."/>
            <person name="Nie X."/>
            <person name="Hall N."/>
            <person name="Anjard C."/>
            <person name="Hemphill L."/>
            <person name="Bason N."/>
            <person name="Farbrother P."/>
            <person name="Desany B."/>
            <person name="Just E."/>
            <person name="Morio T."/>
            <person name="Rost R."/>
            <person name="Churcher C.M."/>
            <person name="Cooper J."/>
            <person name="Haydock S."/>
            <person name="van Driessche N."/>
            <person name="Cronin A."/>
            <person name="Goodhead I."/>
            <person name="Muzny D.M."/>
            <person name="Mourier T."/>
            <person name="Pain A."/>
            <person name="Lu M."/>
            <person name="Harper D."/>
            <person name="Lindsay R."/>
            <person name="Hauser H."/>
            <person name="James K.D."/>
            <person name="Quiles M."/>
            <person name="Madan Babu M."/>
            <person name="Saito T."/>
            <person name="Buchrieser C."/>
            <person name="Wardroper A."/>
            <person name="Felder M."/>
            <person name="Thangavelu M."/>
            <person name="Johnson D."/>
            <person name="Knights A."/>
            <person name="Loulseged H."/>
            <person name="Mungall K.L."/>
            <person name="Oliver K."/>
            <person name="Price C."/>
            <person name="Quail M.A."/>
            <person name="Urushihara H."/>
            <person name="Hernandez J."/>
            <person name="Rabbinowitsch E."/>
            <person name="Steffen D."/>
            <person name="Sanders M."/>
            <person name="Ma J."/>
            <person name="Kohara Y."/>
            <person name="Sharp S."/>
            <person name="Simmonds M.N."/>
            <person name="Spiegler S."/>
            <person name="Tivey A."/>
            <person name="Sugano S."/>
            <person name="White B."/>
            <person name="Walker D."/>
            <person name="Woodward J.R."/>
            <person name="Winckler T."/>
            <person name="Tanaka Y."/>
            <person name="Shaulsky G."/>
            <person name="Schleicher M."/>
            <person name="Weinstock G.M."/>
            <person name="Rosenthal A."/>
            <person name="Cox E.C."/>
            <person name="Chisholm R.L."/>
            <person name="Gibbs R.A."/>
            <person name="Loomis W.F."/>
            <person name="Platzer M."/>
            <person name="Kay R.R."/>
            <person name="Williams J.G."/>
            <person name="Dear P.H."/>
            <person name="Noegel A.A."/>
            <person name="Barrell B.G."/>
            <person name="Kuspa A."/>
        </authorList>
    </citation>
    <scope>NUCLEOTIDE SEQUENCE [LARGE SCALE GENOMIC DNA]</scope>
    <source>
        <strain>AX4</strain>
    </source>
</reference>
<proteinExistence type="predicted"/>
<name>Y8915_DICDI</name>